<evidence type="ECO:0000255" key="1"/>
<evidence type="ECO:0000269" key="2">
    <source>
    </source>
</evidence>
<evidence type="ECO:0000303" key="3">
    <source>
    </source>
</evidence>
<evidence type="ECO:0000305" key="4"/>
<evidence type="ECO:0000305" key="5">
    <source>
    </source>
</evidence>
<evidence type="ECO:0000312" key="6">
    <source>
        <dbReference type="Araport" id="AT2G22040"/>
    </source>
</evidence>
<evidence type="ECO:0000312" key="7">
    <source>
        <dbReference type="EMBL" id="AEC07254.1"/>
    </source>
</evidence>
<organism>
    <name type="scientific">Arabidopsis thaliana</name>
    <name type="common">Mouse-ear cress</name>
    <dbReference type="NCBI Taxonomy" id="3702"/>
    <lineage>
        <taxon>Eukaryota</taxon>
        <taxon>Viridiplantae</taxon>
        <taxon>Streptophyta</taxon>
        <taxon>Embryophyta</taxon>
        <taxon>Tracheophyta</taxon>
        <taxon>Spermatophyta</taxon>
        <taxon>Magnoliopsida</taxon>
        <taxon>eudicotyledons</taxon>
        <taxon>Gunneridae</taxon>
        <taxon>Pentapetalae</taxon>
        <taxon>rosids</taxon>
        <taxon>malvids</taxon>
        <taxon>Brassicales</taxon>
        <taxon>Brassicaceae</taxon>
        <taxon>Camelineae</taxon>
        <taxon>Arabidopsis</taxon>
    </lineage>
</organism>
<keyword id="KW-0025">Alternative splicing</keyword>
<keyword id="KW-1185">Reference proteome</keyword>
<keyword id="KW-0677">Repeat</keyword>
<keyword id="KW-0853">WD repeat</keyword>
<reference key="1">
    <citation type="journal article" date="1999" name="Nature">
        <title>Sequence and analysis of chromosome 2 of the plant Arabidopsis thaliana.</title>
        <authorList>
            <person name="Lin X."/>
            <person name="Kaul S."/>
            <person name="Rounsley S.D."/>
            <person name="Shea T.P."/>
            <person name="Benito M.-I."/>
            <person name="Town C.D."/>
            <person name="Fujii C.Y."/>
            <person name="Mason T.M."/>
            <person name="Bowman C.L."/>
            <person name="Barnstead M.E."/>
            <person name="Feldblyum T.V."/>
            <person name="Buell C.R."/>
            <person name="Ketchum K.A."/>
            <person name="Lee J.J."/>
            <person name="Ronning C.M."/>
            <person name="Koo H.L."/>
            <person name="Moffat K.S."/>
            <person name="Cronin L.A."/>
            <person name="Shen M."/>
            <person name="Pai G."/>
            <person name="Van Aken S."/>
            <person name="Umayam L."/>
            <person name="Tallon L.J."/>
            <person name="Gill J.E."/>
            <person name="Adams M.D."/>
            <person name="Carrera A.J."/>
            <person name="Creasy T.H."/>
            <person name="Goodman H.M."/>
            <person name="Somerville C.R."/>
            <person name="Copenhaver G.P."/>
            <person name="Preuss D."/>
            <person name="Nierman W.C."/>
            <person name="White O."/>
            <person name="Eisen J.A."/>
            <person name="Salzberg S.L."/>
            <person name="Fraser C.M."/>
            <person name="Venter J.C."/>
        </authorList>
    </citation>
    <scope>NUCLEOTIDE SEQUENCE [LARGE SCALE GENOMIC DNA]</scope>
    <source>
        <strain>cv. Columbia</strain>
    </source>
</reference>
<reference key="2">
    <citation type="journal article" date="2017" name="Plant J.">
        <title>Araport11: a complete reannotation of the Arabidopsis thaliana reference genome.</title>
        <authorList>
            <person name="Cheng C.Y."/>
            <person name="Krishnakumar V."/>
            <person name="Chan A.P."/>
            <person name="Thibaud-Nissen F."/>
            <person name="Schobel S."/>
            <person name="Town C.D."/>
        </authorList>
    </citation>
    <scope>GENOME REANNOTATION</scope>
    <source>
        <strain>cv. Columbia</strain>
    </source>
</reference>
<reference key="3">
    <citation type="journal article" date="2012" name="Plant Cell">
        <title>Mutations in the Arabidopsis homolog of LST8/GbetaL, a partner of the target of Rapamycin kinase, impair plant growth, flowering, and metabolic adaptation to long days.</title>
        <authorList>
            <person name="Moreau M."/>
            <person name="Azzopardi M."/>
            <person name="Clement G."/>
            <person name="Dobrenel T."/>
            <person name="Marchive C."/>
            <person name="Renne C."/>
            <person name="Martin-Magniette M.-L."/>
            <person name="Taconnat L."/>
            <person name="Renou J.-P."/>
            <person name="Robaglia C."/>
            <person name="Meyer C."/>
        </authorList>
    </citation>
    <scope>FUNCTION</scope>
    <scope>DISRUPTION PHENOTYPE</scope>
</reference>
<feature type="chain" id="PRO_0000444993" description="Non-functional target of rapamycin complex subunit LST8-2">
    <location>
        <begin position="1"/>
        <end position="313"/>
    </location>
</feature>
<feature type="repeat" description="WD 1" evidence="1">
    <location>
        <begin position="1"/>
        <end position="35"/>
    </location>
</feature>
<feature type="repeat" description="WD 2" evidence="1">
    <location>
        <begin position="38"/>
        <end position="76"/>
    </location>
</feature>
<feature type="repeat" description="WD 3" evidence="1">
    <location>
        <begin position="82"/>
        <end position="121"/>
    </location>
</feature>
<feature type="repeat" description="WD 4" evidence="1">
    <location>
        <begin position="123"/>
        <end position="162"/>
    </location>
</feature>
<feature type="repeat" description="WD 5" evidence="1">
    <location>
        <begin position="166"/>
        <end position="205"/>
    </location>
</feature>
<feature type="repeat" description="WD 6" evidence="1">
    <location>
        <begin position="215"/>
        <end position="255"/>
    </location>
</feature>
<feature type="repeat" description="WD 7" evidence="1">
    <location>
        <begin position="258"/>
        <end position="297"/>
    </location>
</feature>
<feature type="splice variant" id="VSP_059667" description="In isoform 2.">
    <original>NNR</original>
    <variation>NK</variation>
    <location>
        <begin position="229"/>
        <end position="231"/>
    </location>
</feature>
<comment type="function">
    <text evidence="5">Probable non-functional protein.</text>
</comment>
<comment type="alternative products">
    <event type="alternative splicing"/>
    <isoform>
        <id>F4IIK6-1</id>
        <name>1</name>
        <sequence type="displayed"/>
    </isoform>
    <isoform>
        <id>F4IIK6-2</id>
        <name>2</name>
        <sequence type="described" ref="VSP_059667"/>
    </isoform>
</comment>
<comment type="disruption phenotype">
    <text evidence="2">No visible phenotype under normal growth conditions.</text>
</comment>
<comment type="miscellaneous">
    <text evidence="5">The existence of a second LST8 copy gene is specific to Arabidopsis and could be the result of a recent duplication. The expression of this duplicated gene (At2g22040) could not be detected experimentally. Could be a non-functional gene.</text>
</comment>
<comment type="miscellaneous">
    <molecule>Isoform 2</molecule>
    <text evidence="4">May be due to a competing acceptor splice site.</text>
</comment>
<comment type="similarity">
    <text evidence="4">Belongs to the WD repeat LST8 family.</text>
</comment>
<accession>F4IIK6</accession>
<accession>Q9SI01</accession>
<protein>
    <recommendedName>
        <fullName evidence="4">Non-functional target of rapamycin complex subunit LST8-2</fullName>
        <shortName evidence="4">TORC subunit LST8 homolog 2</shortName>
    </recommendedName>
    <alternativeName>
        <fullName evidence="4">Lethal with SEC13 protein 8 homolog 2</fullName>
    </alternativeName>
</protein>
<proteinExistence type="inferred from homology"/>
<gene>
    <name evidence="3" type="primary">LST8-2</name>
    <name evidence="6" type="ordered locus">At2g22040</name>
    <name evidence="7" type="ORF">T16B14.11</name>
    <name evidence="7" type="ORF">T16B14_11</name>
</gene>
<dbReference type="EMBL" id="AC007019">
    <property type="protein sequence ID" value="AAM15346.1"/>
    <property type="molecule type" value="Genomic_DNA"/>
</dbReference>
<dbReference type="EMBL" id="AC007232">
    <property type="protein sequence ID" value="AAD25820.1"/>
    <property type="molecule type" value="Genomic_DNA"/>
</dbReference>
<dbReference type="EMBL" id="CP002685">
    <property type="protein sequence ID" value="AEC07254.1"/>
    <property type="molecule type" value="Genomic_DNA"/>
</dbReference>
<dbReference type="PIR" id="C84608">
    <property type="entry name" value="C84608"/>
</dbReference>
<dbReference type="RefSeq" id="NP_179795.2">
    <molecule id="F4IIK6-1"/>
    <property type="nucleotide sequence ID" value="NM_127773.2"/>
</dbReference>
<dbReference type="SMR" id="F4IIK6"/>
<dbReference type="FunCoup" id="F4IIK6">
    <property type="interactions" value="2549"/>
</dbReference>
<dbReference type="STRING" id="3702.F4IIK6"/>
<dbReference type="PaxDb" id="3702-AT2G22040.1"/>
<dbReference type="EnsemblPlants" id="AT2G22040.1">
    <molecule id="F4IIK6-1"/>
    <property type="protein sequence ID" value="AT2G22040.1"/>
    <property type="gene ID" value="AT2G22040"/>
</dbReference>
<dbReference type="GeneID" id="816739"/>
<dbReference type="Gramene" id="AT2G22040.1">
    <molecule id="F4IIK6-1"/>
    <property type="protein sequence ID" value="AT2G22040.1"/>
    <property type="gene ID" value="AT2G22040"/>
</dbReference>
<dbReference type="KEGG" id="ath:AT2G22040"/>
<dbReference type="Araport" id="AT2G22040"/>
<dbReference type="TAIR" id="AT2G22040">
    <property type="gene designation" value="LST8-2"/>
</dbReference>
<dbReference type="eggNOG" id="KOG0315">
    <property type="taxonomic scope" value="Eukaryota"/>
</dbReference>
<dbReference type="HOGENOM" id="CLU_000288_57_5_1"/>
<dbReference type="InParanoid" id="F4IIK6"/>
<dbReference type="OMA" id="ECQREFR"/>
<dbReference type="PRO" id="PR:F4IIK6"/>
<dbReference type="Proteomes" id="UP000006548">
    <property type="component" value="Chromosome 2"/>
</dbReference>
<dbReference type="ExpressionAtlas" id="F4IIK6">
    <property type="expression patterns" value="baseline and differential"/>
</dbReference>
<dbReference type="GO" id="GO:0031931">
    <property type="term" value="C:TORC1 complex"/>
    <property type="evidence" value="ECO:0007669"/>
    <property type="project" value="InterPro"/>
</dbReference>
<dbReference type="GO" id="GO:0031932">
    <property type="term" value="C:TORC2 complex"/>
    <property type="evidence" value="ECO:0007669"/>
    <property type="project" value="InterPro"/>
</dbReference>
<dbReference type="GO" id="GO:0031929">
    <property type="term" value="P:TOR signaling"/>
    <property type="evidence" value="ECO:0007669"/>
    <property type="project" value="InterPro"/>
</dbReference>
<dbReference type="CDD" id="cd00200">
    <property type="entry name" value="WD40"/>
    <property type="match status" value="1"/>
</dbReference>
<dbReference type="FunFam" id="2.130.10.10:FF:000179">
    <property type="entry name" value="Target of rapamycin complex subunit LST8"/>
    <property type="match status" value="1"/>
</dbReference>
<dbReference type="Gene3D" id="2.130.10.10">
    <property type="entry name" value="YVTN repeat-like/Quinoprotein amine dehydrogenase"/>
    <property type="match status" value="1"/>
</dbReference>
<dbReference type="InterPro" id="IPR020472">
    <property type="entry name" value="G-protein_beta_WD-40_rep"/>
</dbReference>
<dbReference type="InterPro" id="IPR037588">
    <property type="entry name" value="MLST8"/>
</dbReference>
<dbReference type="InterPro" id="IPR015943">
    <property type="entry name" value="WD40/YVTN_repeat-like_dom_sf"/>
</dbReference>
<dbReference type="InterPro" id="IPR019775">
    <property type="entry name" value="WD40_repeat_CS"/>
</dbReference>
<dbReference type="InterPro" id="IPR036322">
    <property type="entry name" value="WD40_repeat_dom_sf"/>
</dbReference>
<dbReference type="InterPro" id="IPR001680">
    <property type="entry name" value="WD40_rpt"/>
</dbReference>
<dbReference type="PANTHER" id="PTHR19842">
    <property type="entry name" value="G BETA-LIKE PROTEIN GBL"/>
    <property type="match status" value="1"/>
</dbReference>
<dbReference type="PANTHER" id="PTHR19842:SF0">
    <property type="entry name" value="TARGET OF RAPAMYCIN COMPLEX SUBUNIT LST8"/>
    <property type="match status" value="1"/>
</dbReference>
<dbReference type="Pfam" id="PF00400">
    <property type="entry name" value="WD40"/>
    <property type="match status" value="5"/>
</dbReference>
<dbReference type="PRINTS" id="PR00320">
    <property type="entry name" value="GPROTEINBRPT"/>
</dbReference>
<dbReference type="SMART" id="SM00320">
    <property type="entry name" value="WD40"/>
    <property type="match status" value="6"/>
</dbReference>
<dbReference type="SUPFAM" id="SSF50978">
    <property type="entry name" value="WD40 repeat-like"/>
    <property type="match status" value="1"/>
</dbReference>
<dbReference type="PROSITE" id="PS00678">
    <property type="entry name" value="WD_REPEATS_1"/>
    <property type="match status" value="3"/>
</dbReference>
<dbReference type="PROSITE" id="PS50082">
    <property type="entry name" value="WD_REPEATS_2"/>
    <property type="match status" value="5"/>
</dbReference>
<dbReference type="PROSITE" id="PS50294">
    <property type="entry name" value="WD_REPEATS_REGION"/>
    <property type="match status" value="1"/>
</dbReference>
<name>LST82_ARATH</name>
<sequence length="313" mass="35952">MFENKPDDSPVYLATASHDQTIRLWQARTGRCYFSFRYPDLHVNRLELTPEKGKLVAACNPHIRLFDLRSYNPHIPVRNFVSHTKNVMAVGFQYTGHMMYSGSEDGSVKIWDLRVRECQREFRSVSPVNTVVLHPNQTELISGDQNGNIRVWDLRADLCSCELVPEVGTPIRSLTVMWDGTMVVAANDRGTCYVWRSLCERQTMTEFEPLHKLQAHNSHILKCLLSPGNNRYLATASSDKTVKIWNLDGFKLEKVLTGHERWVWDCDFSMDGEYLVTASSDTTARLWSMRAGKEEMVYQAHRKATVCCTLLRD</sequence>